<comment type="function">
    <text evidence="1">Reversibly transfers an adenylyl group from ATP to 4'-phosphopantetheine, yielding dephospho-CoA (dPCoA) and pyrophosphate.</text>
</comment>
<comment type="catalytic activity">
    <reaction evidence="1">
        <text>(R)-4'-phosphopantetheine + ATP + H(+) = 3'-dephospho-CoA + diphosphate</text>
        <dbReference type="Rhea" id="RHEA:19801"/>
        <dbReference type="ChEBI" id="CHEBI:15378"/>
        <dbReference type="ChEBI" id="CHEBI:30616"/>
        <dbReference type="ChEBI" id="CHEBI:33019"/>
        <dbReference type="ChEBI" id="CHEBI:57328"/>
        <dbReference type="ChEBI" id="CHEBI:61723"/>
        <dbReference type="EC" id="2.7.7.3"/>
    </reaction>
</comment>
<comment type="cofactor">
    <cofactor evidence="1">
        <name>Mg(2+)</name>
        <dbReference type="ChEBI" id="CHEBI:18420"/>
    </cofactor>
</comment>
<comment type="pathway">
    <text evidence="1">Cofactor biosynthesis; coenzyme A biosynthesis; CoA from (R)-pantothenate: step 4/5.</text>
</comment>
<comment type="subunit">
    <text evidence="1">Homohexamer.</text>
</comment>
<comment type="subcellular location">
    <subcellularLocation>
        <location evidence="1">Cytoplasm</location>
    </subcellularLocation>
</comment>
<comment type="similarity">
    <text evidence="1">Belongs to the bacterial CoaD family.</text>
</comment>
<evidence type="ECO:0000255" key="1">
    <source>
        <dbReference type="HAMAP-Rule" id="MF_00151"/>
    </source>
</evidence>
<proteinExistence type="inferred from homology"/>
<sequence>MQKIGIYPGTFDPVTNGHIDIIHRSSELFEKLIVAVAHSSAKNPMFSLDERLKMMQLATKSFKNVECVAFEGLLADLAKEYHCKVLVRGLRVVSDFEYELQMGYANKSLNHELETLYFMPTLQNAFISSSIVRSIIAHKGDASHLVPKEIYPFISKV</sequence>
<protein>
    <recommendedName>
        <fullName evidence="1">Phosphopantetheine adenylyltransferase</fullName>
        <ecNumber evidence="1">2.7.7.3</ecNumber>
    </recommendedName>
    <alternativeName>
        <fullName evidence="1">Dephospho-CoA pyrophosphorylase</fullName>
    </alternativeName>
    <alternativeName>
        <fullName evidence="1">Pantetheine-phosphate adenylyltransferase</fullName>
        <shortName evidence="1">PPAT</shortName>
    </alternativeName>
</protein>
<accession>Q9ZJE4</accession>
<feature type="chain" id="PRO_0000156218" description="Phosphopantetheine adenylyltransferase">
    <location>
        <begin position="1"/>
        <end position="157"/>
    </location>
</feature>
<feature type="binding site" evidence="1">
    <location>
        <begin position="10"/>
        <end position="11"/>
    </location>
    <ligand>
        <name>ATP</name>
        <dbReference type="ChEBI" id="CHEBI:30616"/>
    </ligand>
</feature>
<feature type="binding site" evidence="1">
    <location>
        <position position="10"/>
    </location>
    <ligand>
        <name>substrate</name>
    </ligand>
</feature>
<feature type="binding site" evidence="1">
    <location>
        <position position="18"/>
    </location>
    <ligand>
        <name>ATP</name>
        <dbReference type="ChEBI" id="CHEBI:30616"/>
    </ligand>
</feature>
<feature type="binding site" evidence="1">
    <location>
        <position position="42"/>
    </location>
    <ligand>
        <name>substrate</name>
    </ligand>
</feature>
<feature type="binding site" evidence="1">
    <location>
        <position position="74"/>
    </location>
    <ligand>
        <name>substrate</name>
    </ligand>
</feature>
<feature type="binding site" evidence="1">
    <location>
        <position position="88"/>
    </location>
    <ligand>
        <name>substrate</name>
    </ligand>
</feature>
<feature type="binding site" evidence="1">
    <location>
        <begin position="89"/>
        <end position="91"/>
    </location>
    <ligand>
        <name>ATP</name>
        <dbReference type="ChEBI" id="CHEBI:30616"/>
    </ligand>
</feature>
<feature type="binding site" evidence="1">
    <location>
        <position position="99"/>
    </location>
    <ligand>
        <name>ATP</name>
        <dbReference type="ChEBI" id="CHEBI:30616"/>
    </ligand>
</feature>
<feature type="binding site" evidence="1">
    <location>
        <begin position="124"/>
        <end position="130"/>
    </location>
    <ligand>
        <name>ATP</name>
        <dbReference type="ChEBI" id="CHEBI:30616"/>
    </ligand>
</feature>
<feature type="site" description="Transition state stabilizer" evidence="1">
    <location>
        <position position="18"/>
    </location>
</feature>
<reference key="1">
    <citation type="journal article" date="1999" name="Nature">
        <title>Genomic sequence comparison of two unrelated isolates of the human gastric pathogen Helicobacter pylori.</title>
        <authorList>
            <person name="Alm R.A."/>
            <person name="Ling L.-S.L."/>
            <person name="Moir D.T."/>
            <person name="King B.L."/>
            <person name="Brown E.D."/>
            <person name="Doig P.C."/>
            <person name="Smith D.R."/>
            <person name="Noonan B."/>
            <person name="Guild B.C."/>
            <person name="deJonge B.L."/>
            <person name="Carmel G."/>
            <person name="Tummino P.J."/>
            <person name="Caruso A."/>
            <person name="Uria-Nickelsen M."/>
            <person name="Mills D.M."/>
            <person name="Ives C."/>
            <person name="Gibson R."/>
            <person name="Merberg D."/>
            <person name="Mills S.D."/>
            <person name="Jiang Q."/>
            <person name="Taylor D.E."/>
            <person name="Vovis G.F."/>
            <person name="Trust T.J."/>
        </authorList>
    </citation>
    <scope>NUCLEOTIDE SEQUENCE [LARGE SCALE GENOMIC DNA]</scope>
    <source>
        <strain>J99 / ATCC 700824</strain>
    </source>
</reference>
<gene>
    <name evidence="1" type="primary">coaD</name>
    <name type="synonym">kdtB</name>
    <name type="ordered locus">jhp_1368</name>
</gene>
<name>COAD_HELPJ</name>
<organism>
    <name type="scientific">Helicobacter pylori (strain J99 / ATCC 700824)</name>
    <name type="common">Campylobacter pylori J99</name>
    <dbReference type="NCBI Taxonomy" id="85963"/>
    <lineage>
        <taxon>Bacteria</taxon>
        <taxon>Pseudomonadati</taxon>
        <taxon>Campylobacterota</taxon>
        <taxon>Epsilonproteobacteria</taxon>
        <taxon>Campylobacterales</taxon>
        <taxon>Helicobacteraceae</taxon>
        <taxon>Helicobacter</taxon>
    </lineage>
</organism>
<keyword id="KW-0067">ATP-binding</keyword>
<keyword id="KW-0173">Coenzyme A biosynthesis</keyword>
<keyword id="KW-0963">Cytoplasm</keyword>
<keyword id="KW-0460">Magnesium</keyword>
<keyword id="KW-0547">Nucleotide-binding</keyword>
<keyword id="KW-0548">Nucleotidyltransferase</keyword>
<keyword id="KW-0808">Transferase</keyword>
<dbReference type="EC" id="2.7.7.3" evidence="1"/>
<dbReference type="EMBL" id="AE001439">
    <property type="protein sequence ID" value="AAD06957.1"/>
    <property type="molecule type" value="Genomic_DNA"/>
</dbReference>
<dbReference type="PIR" id="C71814">
    <property type="entry name" value="C71814"/>
</dbReference>
<dbReference type="RefSeq" id="WP_001169238.1">
    <property type="nucleotide sequence ID" value="NC_000921.1"/>
</dbReference>
<dbReference type="SMR" id="Q9ZJE4"/>
<dbReference type="KEGG" id="hpj:jhp_1368"/>
<dbReference type="PATRIC" id="fig|85963.30.peg.1183"/>
<dbReference type="eggNOG" id="COG0669">
    <property type="taxonomic scope" value="Bacteria"/>
</dbReference>
<dbReference type="UniPathway" id="UPA00241">
    <property type="reaction ID" value="UER00355"/>
</dbReference>
<dbReference type="Proteomes" id="UP000000804">
    <property type="component" value="Chromosome"/>
</dbReference>
<dbReference type="GO" id="GO:0005737">
    <property type="term" value="C:cytoplasm"/>
    <property type="evidence" value="ECO:0007669"/>
    <property type="project" value="UniProtKB-SubCell"/>
</dbReference>
<dbReference type="GO" id="GO:0005524">
    <property type="term" value="F:ATP binding"/>
    <property type="evidence" value="ECO:0007669"/>
    <property type="project" value="UniProtKB-KW"/>
</dbReference>
<dbReference type="GO" id="GO:0004595">
    <property type="term" value="F:pantetheine-phosphate adenylyltransferase activity"/>
    <property type="evidence" value="ECO:0007669"/>
    <property type="project" value="UniProtKB-UniRule"/>
</dbReference>
<dbReference type="GO" id="GO:0015937">
    <property type="term" value="P:coenzyme A biosynthetic process"/>
    <property type="evidence" value="ECO:0007669"/>
    <property type="project" value="UniProtKB-UniRule"/>
</dbReference>
<dbReference type="CDD" id="cd02163">
    <property type="entry name" value="PPAT"/>
    <property type="match status" value="1"/>
</dbReference>
<dbReference type="Gene3D" id="3.40.50.620">
    <property type="entry name" value="HUPs"/>
    <property type="match status" value="1"/>
</dbReference>
<dbReference type="HAMAP" id="MF_00151">
    <property type="entry name" value="PPAT_bact"/>
    <property type="match status" value="1"/>
</dbReference>
<dbReference type="InterPro" id="IPR004821">
    <property type="entry name" value="Cyt_trans-like"/>
</dbReference>
<dbReference type="InterPro" id="IPR001980">
    <property type="entry name" value="PPAT"/>
</dbReference>
<dbReference type="InterPro" id="IPR014729">
    <property type="entry name" value="Rossmann-like_a/b/a_fold"/>
</dbReference>
<dbReference type="NCBIfam" id="TIGR01510">
    <property type="entry name" value="coaD_prev_kdtB"/>
    <property type="match status" value="1"/>
</dbReference>
<dbReference type="NCBIfam" id="TIGR00125">
    <property type="entry name" value="cyt_tran_rel"/>
    <property type="match status" value="1"/>
</dbReference>
<dbReference type="PANTHER" id="PTHR21342">
    <property type="entry name" value="PHOSPHOPANTETHEINE ADENYLYLTRANSFERASE"/>
    <property type="match status" value="1"/>
</dbReference>
<dbReference type="PANTHER" id="PTHR21342:SF1">
    <property type="entry name" value="PHOSPHOPANTETHEINE ADENYLYLTRANSFERASE"/>
    <property type="match status" value="1"/>
</dbReference>
<dbReference type="Pfam" id="PF01467">
    <property type="entry name" value="CTP_transf_like"/>
    <property type="match status" value="1"/>
</dbReference>
<dbReference type="PRINTS" id="PR01020">
    <property type="entry name" value="LPSBIOSNTHSS"/>
</dbReference>
<dbReference type="SUPFAM" id="SSF52374">
    <property type="entry name" value="Nucleotidylyl transferase"/>
    <property type="match status" value="1"/>
</dbReference>